<proteinExistence type="evidence at protein level"/>
<geneLocation type="cyanelle"/>
<reference key="1">
    <citation type="journal article" date="1995" name="Plant Mol. Biol. Rep.">
        <title>Nucleotide sequence of the cyanelle DNA from Cyanophora paradoxa.</title>
        <authorList>
            <person name="Stirewalt V.L."/>
            <person name="Michalowski C.B."/>
            <person name="Loeffelhardt W."/>
            <person name="Bohnert H.J."/>
            <person name="Bryant D.A."/>
        </authorList>
    </citation>
    <scope>NUCLEOTIDE SEQUENCE [LARGE SCALE GENOMIC DNA]</scope>
    <source>
        <strain>UTEX LB 555 / Pringsheim</strain>
    </source>
</reference>
<reference key="2">
    <citation type="book" date="1997" name="Eukaryotism and symbiosis">
        <title>The complete sequence of the cyanelle genome of Cyanophora paradoxa: the genetic complexity of a primitive plastid.</title>
        <editorList>
            <person name="Schenk H.E.A."/>
            <person name="Herrmann R."/>
            <person name="Jeon K.W."/>
            <person name="Mueller N.E."/>
            <person name="Schwemmler W."/>
        </editorList>
        <authorList>
            <person name="Loeffelhardt W."/>
            <person name="Stirewalt V.L."/>
            <person name="Michalowski C.B."/>
            <person name="Annarella M."/>
            <person name="Farley J.Y."/>
            <person name="Schluchter W.M."/>
            <person name="Chung S."/>
            <person name="Newmann-Spallart C."/>
            <person name="Steiner J.M."/>
            <person name="Jakowitsch J."/>
            <person name="Bohnert H.J."/>
            <person name="Bryant D.A."/>
        </authorList>
    </citation>
    <scope>NUCLEOTIDE SEQUENCE [LARGE SCALE GENOMIC DNA]</scope>
    <source>
        <strain>UTEX LB 555 / Pringsheim</strain>
    </source>
</reference>
<keyword id="KW-0002">3D-structure</keyword>
<keyword id="KW-0194">Cyanelle</keyword>
<keyword id="KW-0472">Membrane</keyword>
<keyword id="KW-0602">Photosynthesis</keyword>
<keyword id="KW-0603">Photosystem I</keyword>
<keyword id="KW-0934">Plastid</keyword>
<keyword id="KW-0732">Signal</keyword>
<keyword id="KW-0793">Thylakoid</keyword>
<keyword id="KW-0812">Transmembrane</keyword>
<keyword id="KW-1133">Transmembrane helix</keyword>
<accession>P48115</accession>
<evidence type="ECO:0000250" key="1"/>
<evidence type="ECO:0000255" key="2"/>
<evidence type="ECO:0000305" key="3"/>
<evidence type="ECO:0007829" key="4">
    <source>
        <dbReference type="PDB" id="7DR0"/>
    </source>
</evidence>
<evidence type="ECO:0007829" key="5">
    <source>
        <dbReference type="PDB" id="7DR1"/>
    </source>
</evidence>
<sequence>MRKLFLLMFCLSGLILTTDIRPVRADVAGLIPCSQSDAFERRLKNTTQRLENRLKKYEPGSAPAEALQKQIDKTQQRFDKYRNSGLLCGADGLPHLITDGRWSHAGEFTIPGLLFLYIAGFIGWSGRSYLQAVAASDNSTEKEIIIDIPVALQSVSKGFVWPLAALQEFSSGKLTARDEEITISPR</sequence>
<name>PSAF_CYAPA</name>
<dbReference type="EMBL" id="U30821">
    <property type="protein sequence ID" value="AAA81184.1"/>
    <property type="molecule type" value="Genomic_DNA"/>
</dbReference>
<dbReference type="PIR" id="T06841">
    <property type="entry name" value="T06841"/>
</dbReference>
<dbReference type="RefSeq" id="NP_043153.1">
    <property type="nucleotide sequence ID" value="NC_001675.1"/>
</dbReference>
<dbReference type="PDB" id="7DR0">
    <property type="method" value="EM"/>
    <property type="resolution" value="3.30 A"/>
    <property type="chains" value="F=1-186"/>
</dbReference>
<dbReference type="PDB" id="7DR1">
    <property type="method" value="EM"/>
    <property type="resolution" value="3.20 A"/>
    <property type="chains" value="F=1-186"/>
</dbReference>
<dbReference type="PDB" id="7DR2">
    <property type="method" value="EM"/>
    <property type="resolution" value="3.80 A"/>
    <property type="chains" value="aF/bF/cF/dF=1-186"/>
</dbReference>
<dbReference type="PDBsum" id="7DR0"/>
<dbReference type="PDBsum" id="7DR1"/>
<dbReference type="PDBsum" id="7DR2"/>
<dbReference type="EMDB" id="EMD-30820"/>
<dbReference type="EMDB" id="EMD-30821"/>
<dbReference type="EMDB" id="EMD-30823"/>
<dbReference type="SMR" id="P48115"/>
<dbReference type="GeneID" id="801569"/>
<dbReference type="GO" id="GO:0033115">
    <property type="term" value="C:cyanelle thylakoid membrane"/>
    <property type="evidence" value="ECO:0007669"/>
    <property type="project" value="UniProtKB-SubCell"/>
</dbReference>
<dbReference type="GO" id="GO:0009538">
    <property type="term" value="C:photosystem I reaction center"/>
    <property type="evidence" value="ECO:0007669"/>
    <property type="project" value="InterPro"/>
</dbReference>
<dbReference type="GO" id="GO:0015979">
    <property type="term" value="P:photosynthesis"/>
    <property type="evidence" value="ECO:0007669"/>
    <property type="project" value="UniProtKB-KW"/>
</dbReference>
<dbReference type="FunFam" id="1.10.8.110:FF:000001">
    <property type="entry name" value="Photosystem I reaction center subunit III"/>
    <property type="match status" value="1"/>
</dbReference>
<dbReference type="Gene3D" id="1.10.8.110">
    <property type="entry name" value="Photosystem I PsaF, reaction centre subunit III"/>
    <property type="match status" value="1"/>
</dbReference>
<dbReference type="InterPro" id="IPR003666">
    <property type="entry name" value="PSI_PsaF"/>
</dbReference>
<dbReference type="InterPro" id="IPR036577">
    <property type="entry name" value="PSI_PsaF_sf"/>
</dbReference>
<dbReference type="PANTHER" id="PTHR34939">
    <property type="entry name" value="PHOTOSYSTEM I REACTION CENTER SUBUNIT III, CHLOROPLASTIC"/>
    <property type="match status" value="1"/>
</dbReference>
<dbReference type="PANTHER" id="PTHR34939:SF1">
    <property type="entry name" value="PHOTOSYSTEM I REACTION CENTER SUBUNIT III, CHLOROPLASTIC"/>
    <property type="match status" value="1"/>
</dbReference>
<dbReference type="Pfam" id="PF02507">
    <property type="entry name" value="PSI_PsaF"/>
    <property type="match status" value="1"/>
</dbReference>
<dbReference type="SUPFAM" id="SSF81536">
    <property type="entry name" value="Subunit III of photosystem I reaction centre, PsaF"/>
    <property type="match status" value="1"/>
</dbReference>
<protein>
    <recommendedName>
        <fullName>Photosystem I reaction center subunit III</fullName>
    </recommendedName>
    <alternativeName>
        <fullName>PSI-F</fullName>
    </alternativeName>
</protein>
<organism>
    <name type="scientific">Cyanophora paradoxa</name>
    <dbReference type="NCBI Taxonomy" id="2762"/>
    <lineage>
        <taxon>Eukaryota</taxon>
        <taxon>Glaucocystophyceae</taxon>
        <taxon>Cyanophoraceae</taxon>
        <taxon>Cyanophora</taxon>
    </lineage>
</organism>
<gene>
    <name type="primary">psaF</name>
</gene>
<comment type="function">
    <text>Probably participates in efficiency of electron transfer from plastocyanin to P700 (or cytochrome c553 in algae and cyanobacteria). This plastocyanin-docking protein contributes to the specific association of plastocyanin to PSI.</text>
</comment>
<comment type="subcellular location">
    <subcellularLocation>
        <location evidence="1">Plastid</location>
        <location evidence="1">Cyanelle thylakoid membrane</location>
        <topology evidence="1">Multi-pass membrane protein</topology>
    </subcellularLocation>
    <text evidence="1">The soluble domain is associated with the lumenal side of the thylakoid membrane.</text>
</comment>
<comment type="similarity">
    <text evidence="3">Belongs to the PsaF family.</text>
</comment>
<feature type="signal peptide" evidence="2">
    <location>
        <begin position="1"/>
        <end position="25"/>
    </location>
</feature>
<feature type="chain" id="PRO_0000207751" description="Photosystem I reaction center subunit III">
    <location>
        <begin position="26"/>
        <end position="186"/>
    </location>
</feature>
<feature type="transmembrane region" description="Helical" evidence="2">
    <location>
        <begin position="105"/>
        <end position="125"/>
    </location>
</feature>
<feature type="transmembrane region" description="Helical" evidence="2">
    <location>
        <begin position="144"/>
        <end position="164"/>
    </location>
</feature>
<feature type="turn" evidence="5">
    <location>
        <begin position="33"/>
        <end position="35"/>
    </location>
</feature>
<feature type="helix" evidence="5">
    <location>
        <begin position="37"/>
        <end position="51"/>
    </location>
</feature>
<feature type="strand" evidence="5">
    <location>
        <begin position="54"/>
        <end position="57"/>
    </location>
</feature>
<feature type="helix" evidence="5">
    <location>
        <begin position="62"/>
        <end position="83"/>
    </location>
</feature>
<feature type="strand" evidence="5">
    <location>
        <begin position="94"/>
        <end position="96"/>
    </location>
</feature>
<feature type="helix" evidence="5">
    <location>
        <begin position="105"/>
        <end position="134"/>
    </location>
</feature>
<feature type="strand" evidence="5">
    <location>
        <begin position="135"/>
        <end position="137"/>
    </location>
</feature>
<feature type="helix" evidence="5">
    <location>
        <begin position="141"/>
        <end position="144"/>
    </location>
</feature>
<feature type="helix" evidence="5">
    <location>
        <begin position="148"/>
        <end position="158"/>
    </location>
</feature>
<feature type="helix" evidence="5">
    <location>
        <begin position="161"/>
        <end position="170"/>
    </location>
</feature>
<feature type="turn" evidence="4">
    <location>
        <begin position="178"/>
        <end position="180"/>
    </location>
</feature>